<protein>
    <recommendedName>
        <fullName evidence="2">GTP cyclohydrolase 1</fullName>
        <ecNumber evidence="2">3.5.4.16</ecNumber>
    </recommendedName>
    <alternativeName>
        <fullName evidence="2">GTP cyclohydrolase I</fullName>
        <shortName evidence="2">GTP-CH-I</shortName>
    </alternativeName>
</protein>
<accession>A7H1R1</accession>
<feature type="chain" id="PRO_1000043672" description="GTP cyclohydrolase 1">
    <location>
        <begin position="1"/>
        <end position="190"/>
    </location>
</feature>
<feature type="binding site" evidence="2">
    <location>
        <position position="75"/>
    </location>
    <ligand>
        <name>Zn(2+)</name>
        <dbReference type="ChEBI" id="CHEBI:29105"/>
    </ligand>
</feature>
<feature type="binding site" evidence="2">
    <location>
        <position position="78"/>
    </location>
    <ligand>
        <name>Zn(2+)</name>
        <dbReference type="ChEBI" id="CHEBI:29105"/>
    </ligand>
</feature>
<feature type="binding site" evidence="2">
    <location>
        <position position="146"/>
    </location>
    <ligand>
        <name>Zn(2+)</name>
        <dbReference type="ChEBI" id="CHEBI:29105"/>
    </ligand>
</feature>
<evidence type="ECO:0000250" key="1"/>
<evidence type="ECO:0000255" key="2">
    <source>
        <dbReference type="HAMAP-Rule" id="MF_00223"/>
    </source>
</evidence>
<reference key="1">
    <citation type="submission" date="2007-07" db="EMBL/GenBank/DDBJ databases">
        <title>Complete genome sequence of Campylobacter jejuni subsp doylei 269.97 isolated from human blood.</title>
        <authorList>
            <person name="Fouts D.E."/>
            <person name="Mongodin E.F."/>
            <person name="Puiu D."/>
            <person name="Sebastian Y."/>
            <person name="Miller W.G."/>
            <person name="Mandrell R.E."/>
            <person name="Lastovica A.J."/>
            <person name="Nelson K.E."/>
        </authorList>
    </citation>
    <scope>NUCLEOTIDE SEQUENCE [LARGE SCALE GENOMIC DNA]</scope>
    <source>
        <strain>ATCC BAA-1458 / RM4099 / 269.97</strain>
    </source>
</reference>
<organism>
    <name type="scientific">Campylobacter jejuni subsp. doylei (strain ATCC BAA-1458 / RM4099 / 269.97)</name>
    <dbReference type="NCBI Taxonomy" id="360109"/>
    <lineage>
        <taxon>Bacteria</taxon>
        <taxon>Pseudomonadati</taxon>
        <taxon>Campylobacterota</taxon>
        <taxon>Epsilonproteobacteria</taxon>
        <taxon>Campylobacterales</taxon>
        <taxon>Campylobacteraceae</taxon>
        <taxon>Campylobacter</taxon>
    </lineage>
</organism>
<dbReference type="EC" id="3.5.4.16" evidence="2"/>
<dbReference type="EMBL" id="CP000768">
    <property type="protein sequence ID" value="ABS43323.1"/>
    <property type="molecule type" value="Genomic_DNA"/>
</dbReference>
<dbReference type="SMR" id="A7H1R1"/>
<dbReference type="KEGG" id="cjd:JJD26997_0204"/>
<dbReference type="HOGENOM" id="CLU_049768_3_1_7"/>
<dbReference type="UniPathway" id="UPA00848">
    <property type="reaction ID" value="UER00151"/>
</dbReference>
<dbReference type="Proteomes" id="UP000002302">
    <property type="component" value="Chromosome"/>
</dbReference>
<dbReference type="GO" id="GO:0005737">
    <property type="term" value="C:cytoplasm"/>
    <property type="evidence" value="ECO:0007669"/>
    <property type="project" value="TreeGrafter"/>
</dbReference>
<dbReference type="GO" id="GO:0005525">
    <property type="term" value="F:GTP binding"/>
    <property type="evidence" value="ECO:0007669"/>
    <property type="project" value="UniProtKB-KW"/>
</dbReference>
<dbReference type="GO" id="GO:0003934">
    <property type="term" value="F:GTP cyclohydrolase I activity"/>
    <property type="evidence" value="ECO:0007669"/>
    <property type="project" value="UniProtKB-UniRule"/>
</dbReference>
<dbReference type="GO" id="GO:0008270">
    <property type="term" value="F:zinc ion binding"/>
    <property type="evidence" value="ECO:0007669"/>
    <property type="project" value="UniProtKB-UniRule"/>
</dbReference>
<dbReference type="GO" id="GO:0006730">
    <property type="term" value="P:one-carbon metabolic process"/>
    <property type="evidence" value="ECO:0007669"/>
    <property type="project" value="UniProtKB-UniRule"/>
</dbReference>
<dbReference type="GO" id="GO:0006729">
    <property type="term" value="P:tetrahydrobiopterin biosynthetic process"/>
    <property type="evidence" value="ECO:0007669"/>
    <property type="project" value="TreeGrafter"/>
</dbReference>
<dbReference type="GO" id="GO:0046654">
    <property type="term" value="P:tetrahydrofolate biosynthetic process"/>
    <property type="evidence" value="ECO:0007669"/>
    <property type="project" value="UniProtKB-UniRule"/>
</dbReference>
<dbReference type="CDD" id="cd00642">
    <property type="entry name" value="GTP_cyclohydro1"/>
    <property type="match status" value="1"/>
</dbReference>
<dbReference type="FunFam" id="3.30.1130.10:FF:000001">
    <property type="entry name" value="GTP cyclohydrolase 1"/>
    <property type="match status" value="1"/>
</dbReference>
<dbReference type="Gene3D" id="1.10.286.10">
    <property type="match status" value="1"/>
</dbReference>
<dbReference type="Gene3D" id="3.30.1130.10">
    <property type="match status" value="1"/>
</dbReference>
<dbReference type="HAMAP" id="MF_00223">
    <property type="entry name" value="FolE"/>
    <property type="match status" value="1"/>
</dbReference>
<dbReference type="InterPro" id="IPR043133">
    <property type="entry name" value="GTP-CH-I_C/QueF"/>
</dbReference>
<dbReference type="InterPro" id="IPR043134">
    <property type="entry name" value="GTP-CH-I_N"/>
</dbReference>
<dbReference type="InterPro" id="IPR001474">
    <property type="entry name" value="GTP_CycHdrlase_I"/>
</dbReference>
<dbReference type="InterPro" id="IPR018234">
    <property type="entry name" value="GTP_CycHdrlase_I_CS"/>
</dbReference>
<dbReference type="InterPro" id="IPR020602">
    <property type="entry name" value="GTP_CycHdrlase_I_dom"/>
</dbReference>
<dbReference type="NCBIfam" id="TIGR00063">
    <property type="entry name" value="folE"/>
    <property type="match status" value="1"/>
</dbReference>
<dbReference type="NCBIfam" id="NF006825">
    <property type="entry name" value="PRK09347.1-2"/>
    <property type="match status" value="1"/>
</dbReference>
<dbReference type="NCBIfam" id="NF006826">
    <property type="entry name" value="PRK09347.1-3"/>
    <property type="match status" value="1"/>
</dbReference>
<dbReference type="PANTHER" id="PTHR11109:SF7">
    <property type="entry name" value="GTP CYCLOHYDROLASE 1"/>
    <property type="match status" value="1"/>
</dbReference>
<dbReference type="PANTHER" id="PTHR11109">
    <property type="entry name" value="GTP CYCLOHYDROLASE I"/>
    <property type="match status" value="1"/>
</dbReference>
<dbReference type="Pfam" id="PF01227">
    <property type="entry name" value="GTP_cyclohydroI"/>
    <property type="match status" value="1"/>
</dbReference>
<dbReference type="SUPFAM" id="SSF55620">
    <property type="entry name" value="Tetrahydrobiopterin biosynthesis enzymes-like"/>
    <property type="match status" value="1"/>
</dbReference>
<dbReference type="PROSITE" id="PS00859">
    <property type="entry name" value="GTP_CYCLOHYDROL_1_1"/>
    <property type="match status" value="1"/>
</dbReference>
<comment type="catalytic activity">
    <reaction evidence="2">
        <text>GTP + H2O = 7,8-dihydroneopterin 3'-triphosphate + formate + H(+)</text>
        <dbReference type="Rhea" id="RHEA:17473"/>
        <dbReference type="ChEBI" id="CHEBI:15377"/>
        <dbReference type="ChEBI" id="CHEBI:15378"/>
        <dbReference type="ChEBI" id="CHEBI:15740"/>
        <dbReference type="ChEBI" id="CHEBI:37565"/>
        <dbReference type="ChEBI" id="CHEBI:58462"/>
        <dbReference type="EC" id="3.5.4.16"/>
    </reaction>
</comment>
<comment type="pathway">
    <text evidence="2">Cofactor biosynthesis; 7,8-dihydroneopterin triphosphate biosynthesis; 7,8-dihydroneopterin triphosphate from GTP: step 1/1.</text>
</comment>
<comment type="subunit">
    <text evidence="1">Toroid-shaped homodecamer, composed of two pentamers of five dimers.</text>
</comment>
<comment type="similarity">
    <text evidence="2">Belongs to the GTP cyclohydrolase I family.</text>
</comment>
<name>GCH1_CAMJD</name>
<keyword id="KW-0342">GTP-binding</keyword>
<keyword id="KW-0378">Hydrolase</keyword>
<keyword id="KW-0479">Metal-binding</keyword>
<keyword id="KW-0547">Nucleotide-binding</keyword>
<keyword id="KW-0554">One-carbon metabolism</keyword>
<keyword id="KW-0862">Zinc</keyword>
<sequence length="190" mass="21798">MQKKFEDCVKTMLEIIGENPNREGLIKTPNRVFKAYEFLTSGYTQNVKEILNDALFESSNNEMVLVRDIEFYSLCEHHLLPFFGRAHVAYIPNKKVVGLSKIPRLVEVFARRLQIQEQLTEQIAQALMENADAKGVGVIIEARHMCVEMRGVQKANSTTTTSALRGIFLKNEKIREEFFSLINSAKQVRF</sequence>
<proteinExistence type="inferred from homology"/>
<gene>
    <name evidence="2" type="primary">folE</name>
    <name type="ordered locus">JJD26997_0204</name>
</gene>